<organism>
    <name type="scientific">Dictyostelium discoideum</name>
    <name type="common">Social amoeba</name>
    <dbReference type="NCBI Taxonomy" id="44689"/>
    <lineage>
        <taxon>Eukaryota</taxon>
        <taxon>Amoebozoa</taxon>
        <taxon>Evosea</taxon>
        <taxon>Eumycetozoa</taxon>
        <taxon>Dictyostelia</taxon>
        <taxon>Dictyosteliales</taxon>
        <taxon>Dictyosteliaceae</taxon>
        <taxon>Dictyostelium</taxon>
    </lineage>
</organism>
<accession>Q54FW5</accession>
<name>CUPH_DICDI</name>
<evidence type="ECO:0000250" key="1"/>
<evidence type="ECO:0000255" key="2">
    <source>
        <dbReference type="PROSITE-ProRule" id="PRU00174"/>
    </source>
</evidence>
<evidence type="ECO:0000256" key="3">
    <source>
        <dbReference type="SAM" id="MobiDB-lite"/>
    </source>
</evidence>
<evidence type="ECO:0000305" key="4"/>
<sequence>MINIEDISKSSNQSEEKQLKSTSSKPKYSFAAKSLFKGSNNITPYYLSTSNTFQCVASESIQTWLLSDDGHIFTSSGNFVLDVSSGGYFVELVQLNSNSKTQIWTIDTTNNKIQNQGNGNYLDIDCFNICVAPLNGNATQQWTTFRRAPIPTGNWGYFQSEQLGSNNYWGLSVLNNSTSYNTSVVMNKVQAKSKGQIWQMTSDGHILSRLDGNLVLDIGPSINGSTTNYYLNTNVYKANDLMQQWGINENNQIFNQYYPNLCIGFVGQLGVDSTVNCVLAQPSSACDTCFQWIANPTYSLNQIVSEVPEPFPAYTSGDLLASYQYLSNDATSNFTDDIRSLYTGINVSLQSFLSIVTNATCPSSIHSTEDFSNVQNQIKTELIYAIDVRLVFENYSGFYSKLFSQGSSNLTNLANLINVDMSSNQMVNANYTDAITSIFYSLISEIPVGGSIIANIGQSAVEFGELMSQSNYQGASTYQVELSQLYTHLNTNYENEMANAQSMKDTILQDWGMMSKTYALCFLPTNDPSSLNMNGLDFEKISDVASVAYEIAMIQMLLPTTYQIYFTSAGYWVPYSDGDFAYSDNSGTYIMATIKYSNSYPPKELTDKLWNNGVSKQEFFLSAYGWNLATSLTYYNTTNQYSNIFKLAFPTIKNFTGVPMQFVMTNDGDNLGNFTVKTHFAKFFSTYYSVGDLGHHYFDIAVTDINKNKVANFTVDIKLKALEGSYVSIKTGSLVVQPGYAVGNPICNQGSYSLMFSASILIPIYKSE</sequence>
<reference key="1">
    <citation type="journal article" date="2005" name="Nature">
        <title>The genome of the social amoeba Dictyostelium discoideum.</title>
        <authorList>
            <person name="Eichinger L."/>
            <person name="Pachebat J.A."/>
            <person name="Gloeckner G."/>
            <person name="Rajandream M.A."/>
            <person name="Sucgang R."/>
            <person name="Berriman M."/>
            <person name="Song J."/>
            <person name="Olsen R."/>
            <person name="Szafranski K."/>
            <person name="Xu Q."/>
            <person name="Tunggal B."/>
            <person name="Kummerfeld S."/>
            <person name="Madera M."/>
            <person name="Konfortov B.A."/>
            <person name="Rivero F."/>
            <person name="Bankier A.T."/>
            <person name="Lehmann R."/>
            <person name="Hamlin N."/>
            <person name="Davies R."/>
            <person name="Gaudet P."/>
            <person name="Fey P."/>
            <person name="Pilcher K."/>
            <person name="Chen G."/>
            <person name="Saunders D."/>
            <person name="Sodergren E.J."/>
            <person name="Davis P."/>
            <person name="Kerhornou A."/>
            <person name="Nie X."/>
            <person name="Hall N."/>
            <person name="Anjard C."/>
            <person name="Hemphill L."/>
            <person name="Bason N."/>
            <person name="Farbrother P."/>
            <person name="Desany B."/>
            <person name="Just E."/>
            <person name="Morio T."/>
            <person name="Rost R."/>
            <person name="Churcher C.M."/>
            <person name="Cooper J."/>
            <person name="Haydock S."/>
            <person name="van Driessche N."/>
            <person name="Cronin A."/>
            <person name="Goodhead I."/>
            <person name="Muzny D.M."/>
            <person name="Mourier T."/>
            <person name="Pain A."/>
            <person name="Lu M."/>
            <person name="Harper D."/>
            <person name="Lindsay R."/>
            <person name="Hauser H."/>
            <person name="James K.D."/>
            <person name="Quiles M."/>
            <person name="Madan Babu M."/>
            <person name="Saito T."/>
            <person name="Buchrieser C."/>
            <person name="Wardroper A."/>
            <person name="Felder M."/>
            <person name="Thangavelu M."/>
            <person name="Johnson D."/>
            <person name="Knights A."/>
            <person name="Loulseged H."/>
            <person name="Mungall K.L."/>
            <person name="Oliver K."/>
            <person name="Price C."/>
            <person name="Quail M.A."/>
            <person name="Urushihara H."/>
            <person name="Hernandez J."/>
            <person name="Rabbinowitsch E."/>
            <person name="Steffen D."/>
            <person name="Sanders M."/>
            <person name="Ma J."/>
            <person name="Kohara Y."/>
            <person name="Sharp S."/>
            <person name="Simmonds M.N."/>
            <person name="Spiegler S."/>
            <person name="Tivey A."/>
            <person name="Sugano S."/>
            <person name="White B."/>
            <person name="Walker D."/>
            <person name="Woodward J.R."/>
            <person name="Winckler T."/>
            <person name="Tanaka Y."/>
            <person name="Shaulsky G."/>
            <person name="Schleicher M."/>
            <person name="Weinstock G.M."/>
            <person name="Rosenthal A."/>
            <person name="Cox E.C."/>
            <person name="Chisholm R.L."/>
            <person name="Gibbs R.A."/>
            <person name="Loomis W.F."/>
            <person name="Platzer M."/>
            <person name="Kay R.R."/>
            <person name="Williams J.G."/>
            <person name="Dear P.H."/>
            <person name="Noegel A.A."/>
            <person name="Barrell B.G."/>
            <person name="Kuspa A."/>
        </authorList>
    </citation>
    <scope>NUCLEOTIDE SEQUENCE [LARGE SCALE GENOMIC DNA]</scope>
    <source>
        <strain>AX4</strain>
    </source>
</reference>
<protein>
    <recommendedName>
        <fullName>Putative calcium up-regulated protein H</fullName>
    </recommendedName>
</protein>
<feature type="chain" id="PRO_0000327956" description="Putative calcium up-regulated protein H">
    <location>
        <begin position="1"/>
        <end position="768"/>
    </location>
</feature>
<feature type="domain" description="Ricin B-type lectin 1" evidence="2">
    <location>
        <begin position="25"/>
        <end position="145"/>
    </location>
</feature>
<feature type="domain" description="Ricin B-type lectin 2" evidence="2">
    <location>
        <begin position="116"/>
        <end position="248"/>
    </location>
</feature>
<feature type="region of interest" description="Disordered" evidence="3">
    <location>
        <begin position="1"/>
        <end position="22"/>
    </location>
</feature>
<comment type="function">
    <text evidence="1">May play an important role in stabilizing and/or regulating the cell membrane during Ca(2+) stress or certain stages of development.</text>
</comment>
<comment type="subcellular location">
    <subcellularLocation>
        <location>Cytoplasm</location>
    </subcellularLocation>
    <subcellularLocation>
        <location evidence="1">Membrane</location>
        <topology evidence="1">Peripheral membrane protein</topology>
    </subcellularLocation>
</comment>
<comment type="similarity">
    <text evidence="4">Belongs to the cup family.</text>
</comment>
<proteinExistence type="inferred from homology"/>
<keyword id="KW-0963">Cytoplasm</keyword>
<keyword id="KW-0430">Lectin</keyword>
<keyword id="KW-0472">Membrane</keyword>
<keyword id="KW-1185">Reference proteome</keyword>
<keyword id="KW-0677">Repeat</keyword>
<dbReference type="EMBL" id="AAFI02000164">
    <property type="protein sequence ID" value="EAL62142.1"/>
    <property type="molecule type" value="Genomic_DNA"/>
</dbReference>
<dbReference type="RefSeq" id="XP_635652.1">
    <property type="nucleotide sequence ID" value="XM_630560.1"/>
</dbReference>
<dbReference type="PaxDb" id="44689-DDB0266360"/>
<dbReference type="EnsemblProtists" id="EAL62142">
    <property type="protein sequence ID" value="EAL62142"/>
    <property type="gene ID" value="DDB_G0290563"/>
</dbReference>
<dbReference type="GeneID" id="8627724"/>
<dbReference type="KEGG" id="ddi:DDB_G0290563"/>
<dbReference type="dictyBase" id="DDB_G0290563">
    <property type="gene designation" value="cupH"/>
</dbReference>
<dbReference type="VEuPathDB" id="AmoebaDB:DDB_G0290563"/>
<dbReference type="HOGENOM" id="CLU_020711_0_0_1"/>
<dbReference type="InParanoid" id="Q54FW5"/>
<dbReference type="OMA" id="GSHEYQI"/>
<dbReference type="PhylomeDB" id="Q54FW5"/>
<dbReference type="PRO" id="PR:Q54FW5"/>
<dbReference type="Proteomes" id="UP000002195">
    <property type="component" value="Chromosome 5"/>
</dbReference>
<dbReference type="GO" id="GO:0005737">
    <property type="term" value="C:cytoplasm"/>
    <property type="evidence" value="ECO:0007669"/>
    <property type="project" value="UniProtKB-SubCell"/>
</dbReference>
<dbReference type="GO" id="GO:0016020">
    <property type="term" value="C:membrane"/>
    <property type="evidence" value="ECO:0007669"/>
    <property type="project" value="UniProtKB-SubCell"/>
</dbReference>
<dbReference type="GO" id="GO:0005634">
    <property type="term" value="C:nucleus"/>
    <property type="evidence" value="ECO:0007669"/>
    <property type="project" value="UniProtKB-ARBA"/>
</dbReference>
<dbReference type="GO" id="GO:0030246">
    <property type="term" value="F:carbohydrate binding"/>
    <property type="evidence" value="ECO:0007669"/>
    <property type="project" value="UniProtKB-KW"/>
</dbReference>
<dbReference type="GO" id="GO:0043157">
    <property type="term" value="P:response to cation stress"/>
    <property type="evidence" value="ECO:0000318"/>
    <property type="project" value="GO_Central"/>
</dbReference>
<dbReference type="FunFam" id="2.80.10.50:FF:000086">
    <property type="entry name" value="Calcium up-regulated protein A"/>
    <property type="match status" value="1"/>
</dbReference>
<dbReference type="FunFam" id="2.80.10.50:FF:000098">
    <property type="entry name" value="Calcium up-regulated protein A"/>
    <property type="match status" value="1"/>
</dbReference>
<dbReference type="Gene3D" id="2.80.10.50">
    <property type="match status" value="2"/>
</dbReference>
<dbReference type="InterPro" id="IPR051780">
    <property type="entry name" value="Ca_Up-reg_Membrane_Reg"/>
</dbReference>
<dbReference type="InterPro" id="IPR035992">
    <property type="entry name" value="Ricin_B-like_lectins"/>
</dbReference>
<dbReference type="InterPro" id="IPR000772">
    <property type="entry name" value="Ricin_B_lectin"/>
</dbReference>
<dbReference type="PANTHER" id="PTHR31599">
    <property type="entry name" value="CALCIUM UP-REGULATED PROTEIN A-RELATED"/>
    <property type="match status" value="1"/>
</dbReference>
<dbReference type="PANTHER" id="PTHR31599:SF2">
    <property type="entry name" value="CALCIUM UP-REGULATED PROTEIN A-RELATED"/>
    <property type="match status" value="1"/>
</dbReference>
<dbReference type="Pfam" id="PF00652">
    <property type="entry name" value="Ricin_B_lectin"/>
    <property type="match status" value="1"/>
</dbReference>
<dbReference type="SUPFAM" id="SSF50370">
    <property type="entry name" value="Ricin B-like lectins"/>
    <property type="match status" value="2"/>
</dbReference>
<dbReference type="PROSITE" id="PS50231">
    <property type="entry name" value="RICIN_B_LECTIN"/>
    <property type="match status" value="2"/>
</dbReference>
<gene>
    <name type="primary">cupH</name>
    <name type="ORF">DDB_G0290563</name>
</gene>